<organism>
    <name type="scientific">Sinomicrurus macclellandi</name>
    <name type="common">Macclelland's coral snake</name>
    <name type="synonym">Calliophis macclellandi</name>
    <dbReference type="NCBI Taxonomy" id="931069"/>
    <lineage>
        <taxon>Eukaryota</taxon>
        <taxon>Metazoa</taxon>
        <taxon>Chordata</taxon>
        <taxon>Craniata</taxon>
        <taxon>Vertebrata</taxon>
        <taxon>Euteleostomi</taxon>
        <taxon>Lepidosauria</taxon>
        <taxon>Squamata</taxon>
        <taxon>Bifurcata</taxon>
        <taxon>Unidentata</taxon>
        <taxon>Episquamata</taxon>
        <taxon>Toxicofera</taxon>
        <taxon>Serpentes</taxon>
        <taxon>Colubroidea</taxon>
        <taxon>Elapidae</taxon>
        <taxon>Elapinae</taxon>
        <taxon>Sinomicrurus</taxon>
    </lineage>
</organism>
<keyword id="KW-0249">Electron transport</keyword>
<keyword id="KW-0349">Heme</keyword>
<keyword id="KW-0408">Iron</keyword>
<keyword id="KW-0472">Membrane</keyword>
<keyword id="KW-0479">Metal-binding</keyword>
<keyword id="KW-0496">Mitochondrion</keyword>
<keyword id="KW-0999">Mitochondrion inner membrane</keyword>
<keyword id="KW-0679">Respiratory chain</keyword>
<keyword id="KW-0812">Transmembrane</keyword>
<keyword id="KW-1133">Transmembrane helix</keyword>
<keyword id="KW-0813">Transport</keyword>
<keyword id="KW-0830">Ubiquinone</keyword>
<evidence type="ECO:0000250" key="1"/>
<evidence type="ECO:0000250" key="2">
    <source>
        <dbReference type="UniProtKB" id="P00157"/>
    </source>
</evidence>
<evidence type="ECO:0000255" key="3">
    <source>
        <dbReference type="PROSITE-ProRule" id="PRU00967"/>
    </source>
</evidence>
<evidence type="ECO:0000255" key="4">
    <source>
        <dbReference type="PROSITE-ProRule" id="PRU00968"/>
    </source>
</evidence>
<dbReference type="EMBL" id="AF220409">
    <property type="protein sequence ID" value="AAF35312.1"/>
    <property type="molecule type" value="Genomic_DNA"/>
</dbReference>
<dbReference type="SMR" id="Q9MLD6"/>
<dbReference type="GO" id="GO:0005743">
    <property type="term" value="C:mitochondrial inner membrane"/>
    <property type="evidence" value="ECO:0007669"/>
    <property type="project" value="UniProtKB-SubCell"/>
</dbReference>
<dbReference type="GO" id="GO:0045275">
    <property type="term" value="C:respiratory chain complex III"/>
    <property type="evidence" value="ECO:0007669"/>
    <property type="project" value="InterPro"/>
</dbReference>
<dbReference type="GO" id="GO:0046872">
    <property type="term" value="F:metal ion binding"/>
    <property type="evidence" value="ECO:0007669"/>
    <property type="project" value="UniProtKB-KW"/>
</dbReference>
<dbReference type="GO" id="GO:0008121">
    <property type="term" value="F:ubiquinol-cytochrome-c reductase activity"/>
    <property type="evidence" value="ECO:0007669"/>
    <property type="project" value="InterPro"/>
</dbReference>
<dbReference type="GO" id="GO:0006122">
    <property type="term" value="P:mitochondrial electron transport, ubiquinol to cytochrome c"/>
    <property type="evidence" value="ECO:0007669"/>
    <property type="project" value="TreeGrafter"/>
</dbReference>
<dbReference type="CDD" id="cd00290">
    <property type="entry name" value="cytochrome_b_C"/>
    <property type="match status" value="1"/>
</dbReference>
<dbReference type="CDD" id="cd00284">
    <property type="entry name" value="Cytochrome_b_N"/>
    <property type="match status" value="1"/>
</dbReference>
<dbReference type="Gene3D" id="1.20.810.10">
    <property type="entry name" value="Cytochrome Bc1 Complex, Chain C"/>
    <property type="match status" value="1"/>
</dbReference>
<dbReference type="InterPro" id="IPR005798">
    <property type="entry name" value="Cyt_b/b6_C"/>
</dbReference>
<dbReference type="InterPro" id="IPR036150">
    <property type="entry name" value="Cyt_b/b6_C_sf"/>
</dbReference>
<dbReference type="InterPro" id="IPR005797">
    <property type="entry name" value="Cyt_b/b6_N"/>
</dbReference>
<dbReference type="InterPro" id="IPR027387">
    <property type="entry name" value="Cytb/b6-like_sf"/>
</dbReference>
<dbReference type="InterPro" id="IPR030689">
    <property type="entry name" value="Cytochrome_b"/>
</dbReference>
<dbReference type="InterPro" id="IPR048260">
    <property type="entry name" value="Cytochrome_b_C_euk/bac"/>
</dbReference>
<dbReference type="InterPro" id="IPR048259">
    <property type="entry name" value="Cytochrome_b_N_euk/bac"/>
</dbReference>
<dbReference type="InterPro" id="IPR016174">
    <property type="entry name" value="Di-haem_cyt_TM"/>
</dbReference>
<dbReference type="PANTHER" id="PTHR19271">
    <property type="entry name" value="CYTOCHROME B"/>
    <property type="match status" value="1"/>
</dbReference>
<dbReference type="PANTHER" id="PTHR19271:SF16">
    <property type="entry name" value="CYTOCHROME B"/>
    <property type="match status" value="1"/>
</dbReference>
<dbReference type="Pfam" id="PF00032">
    <property type="entry name" value="Cytochrom_B_C"/>
    <property type="match status" value="1"/>
</dbReference>
<dbReference type="Pfam" id="PF00033">
    <property type="entry name" value="Cytochrome_B"/>
    <property type="match status" value="1"/>
</dbReference>
<dbReference type="PIRSF" id="PIRSF038885">
    <property type="entry name" value="COB"/>
    <property type="match status" value="1"/>
</dbReference>
<dbReference type="SUPFAM" id="SSF81648">
    <property type="entry name" value="a domain/subunit of cytochrome bc1 complex (Ubiquinol-cytochrome c reductase)"/>
    <property type="match status" value="1"/>
</dbReference>
<dbReference type="SUPFAM" id="SSF81342">
    <property type="entry name" value="Transmembrane di-heme cytochromes"/>
    <property type="match status" value="1"/>
</dbReference>
<dbReference type="PROSITE" id="PS51003">
    <property type="entry name" value="CYTB_CTER"/>
    <property type="match status" value="1"/>
</dbReference>
<dbReference type="PROSITE" id="PS51002">
    <property type="entry name" value="CYTB_NTER"/>
    <property type="match status" value="1"/>
</dbReference>
<protein>
    <recommendedName>
        <fullName>Cytochrome b</fullName>
    </recommendedName>
    <alternativeName>
        <fullName>Complex III subunit 3</fullName>
    </alternativeName>
    <alternativeName>
        <fullName>Complex III subunit III</fullName>
    </alternativeName>
    <alternativeName>
        <fullName>Cytochrome b-c1 complex subunit 3</fullName>
    </alternativeName>
    <alternativeName>
        <fullName>Ubiquinol-cytochrome-c reductase complex cytochrome b subunit</fullName>
    </alternativeName>
</protein>
<geneLocation type="mitochondrion"/>
<accession>Q9MLD6</accession>
<comment type="function">
    <text evidence="2">Component of the ubiquinol-cytochrome c reductase complex (complex III or cytochrome b-c1 complex) that is part of the mitochondrial respiratory chain. The b-c1 complex mediates electron transfer from ubiquinol to cytochrome c. Contributes to the generation of a proton gradient across the mitochondrial membrane that is then used for ATP synthesis.</text>
</comment>
<comment type="cofactor">
    <cofactor evidence="2">
        <name>heme b</name>
        <dbReference type="ChEBI" id="CHEBI:60344"/>
    </cofactor>
    <text evidence="2">Binds 2 heme b groups non-covalently.</text>
</comment>
<comment type="subunit">
    <text evidence="2">The cytochrome bc1 complex contains 3 respiratory subunits (MT-CYB, CYC1 and UQCRFS1), 2 core proteins (UQCRC1 and UQCRC2) and probably 6 low-molecular weight proteins.</text>
</comment>
<comment type="subcellular location">
    <subcellularLocation>
        <location evidence="2">Mitochondrion inner membrane</location>
        <topology evidence="2">Multi-pass membrane protein</topology>
    </subcellularLocation>
</comment>
<comment type="miscellaneous">
    <text evidence="1">Heme 1 (or BL or b562) is low-potential and absorbs at about 562 nm, and heme 2 (or BH or b566) is high-potential and absorbs at about 566 nm.</text>
</comment>
<comment type="similarity">
    <text evidence="3 4">Belongs to the cytochrome b family.</text>
</comment>
<comment type="caution">
    <text evidence="2">The full-length protein contains only eight transmembrane helices, not nine as predicted by bioinformatics tools.</text>
</comment>
<reference key="1">
    <citation type="submission" date="1999-12" db="EMBL/GenBank/DDBJ databases">
        <title>The phylogenetic relationships of Asian coral snakes (Elapidae: Calliophis and Maticora) based on morphological and molecular characters.</title>
        <authorList>
            <person name="Slowinski J.B."/>
            <person name="Boundy J."/>
            <person name="Lawson R."/>
        </authorList>
    </citation>
    <scope>NUCLEOTIDE SEQUENCE [GENOMIC DNA]</scope>
</reference>
<sequence>MSNQHTLLISNLLPVGSNISTWWNFGSMLLICLTLQIMTGFFLAIHYTANINLAFSSVVHITRDVPYGWIMQNLHTIGASMFFICIYTHIARGLYYGLYLNKSVWLSGTTLLITLMATAFFGYVLPWGQMSFWAATVITNLLTAIPYLGTTITTWLWGGFSINDPTLTRFFALHFIIPFAIISLSSIHIILLHNKGSNNPLGTNSDIDKIPFHPYHSYKDTLTSTFMLITLFIILSFTPDLFNDPENFSKANPLITPQHIKPEWYFLFAYGILRSIPNKLGGTLALLMSVIILTTMPFTHTSYVRSMTFRPLAQTMFWMLIATFITITWTASKPVEPPFIIISQTTSIFYFSFFIMNPLLGWTENKIMMNY</sequence>
<proteinExistence type="inferred from homology"/>
<feature type="chain" id="PRO_0000060710" description="Cytochrome b">
    <location>
        <begin position="1"/>
        <end position="371"/>
    </location>
</feature>
<feature type="transmembrane region" description="Helical" evidence="2">
    <location>
        <begin position="25"/>
        <end position="45"/>
    </location>
</feature>
<feature type="transmembrane region" description="Helical" evidence="2">
    <location>
        <begin position="69"/>
        <end position="90"/>
    </location>
</feature>
<feature type="transmembrane region" description="Helical" evidence="2">
    <location>
        <begin position="105"/>
        <end position="125"/>
    </location>
</feature>
<feature type="transmembrane region" description="Helical" evidence="2">
    <location>
        <begin position="170"/>
        <end position="190"/>
    </location>
</feature>
<feature type="transmembrane region" description="Helical" evidence="2">
    <location>
        <begin position="218"/>
        <end position="238"/>
    </location>
</feature>
<feature type="transmembrane region" description="Helical" evidence="2">
    <location>
        <begin position="280"/>
        <end position="300"/>
    </location>
</feature>
<feature type="transmembrane region" description="Helical" evidence="2">
    <location>
        <begin position="312"/>
        <end position="332"/>
    </location>
</feature>
<feature type="transmembrane region" description="Helical" evidence="2">
    <location>
        <begin position="339"/>
        <end position="358"/>
    </location>
</feature>
<feature type="binding site" description="axial binding residue" evidence="2">
    <location>
        <position position="75"/>
    </location>
    <ligand>
        <name>heme b</name>
        <dbReference type="ChEBI" id="CHEBI:60344"/>
        <label>b562</label>
    </ligand>
    <ligandPart>
        <name>Fe</name>
        <dbReference type="ChEBI" id="CHEBI:18248"/>
    </ligandPart>
</feature>
<feature type="binding site" description="axial binding residue" evidence="2">
    <location>
        <position position="89"/>
    </location>
    <ligand>
        <name>heme b</name>
        <dbReference type="ChEBI" id="CHEBI:60344"/>
        <label>b566</label>
    </ligand>
    <ligandPart>
        <name>Fe</name>
        <dbReference type="ChEBI" id="CHEBI:18248"/>
    </ligandPart>
</feature>
<feature type="binding site" description="axial binding residue" evidence="2">
    <location>
        <position position="174"/>
    </location>
    <ligand>
        <name>heme b</name>
        <dbReference type="ChEBI" id="CHEBI:60344"/>
        <label>b562</label>
    </ligand>
    <ligandPart>
        <name>Fe</name>
        <dbReference type="ChEBI" id="CHEBI:18248"/>
    </ligandPart>
</feature>
<feature type="binding site" description="axial binding residue" evidence="2">
    <location>
        <position position="188"/>
    </location>
    <ligand>
        <name>heme b</name>
        <dbReference type="ChEBI" id="CHEBI:60344"/>
        <label>b566</label>
    </ligand>
    <ligandPart>
        <name>Fe</name>
        <dbReference type="ChEBI" id="CHEBI:18248"/>
    </ligandPart>
</feature>
<feature type="binding site" evidence="2">
    <location>
        <position position="193"/>
    </location>
    <ligand>
        <name>a ubiquinone</name>
        <dbReference type="ChEBI" id="CHEBI:16389"/>
    </ligand>
</feature>
<name>CYB_SINMA</name>
<gene>
    <name type="primary">MT-CYB</name>
    <name type="synonym">COB</name>
    <name type="synonym">CYTB</name>
    <name type="synonym">MTCYB</name>
</gene>